<reference key="1">
    <citation type="book" date="1980" name="Protides of the biological fluids, Proc. 28th colloquium">
        <title>Trends in the molecular evolution of alpha-crystallin.</title>
        <editorList>
            <person name="Peeters H."/>
        </editorList>
        <authorList>
            <person name="de Jong W.W."/>
            <person name="Zweers A."/>
            <person name="Goodman M."/>
        </authorList>
    </citation>
    <scope>PARTIAL PROTEIN SEQUENCE</scope>
</reference>
<proteinExistence type="evidence at protein level"/>
<feature type="chain" id="PRO_0000125854" description="Alpha-crystallin A chain">
    <location>
        <begin position="1"/>
        <end position="170"/>
    </location>
</feature>
<feature type="domain" description="sHSP" evidence="5">
    <location>
        <begin position="52"/>
        <end position="161"/>
    </location>
</feature>
<feature type="region of interest" description="Required for complex formation with BFSP1 and BFSP2" evidence="4">
    <location>
        <begin position="1"/>
        <end position="63"/>
    </location>
</feature>
<feature type="region of interest" description="Disordered" evidence="6">
    <location>
        <begin position="144"/>
        <end position="170"/>
    </location>
</feature>
<feature type="compositionally biased region" description="Basic and acidic residues" evidence="6">
    <location>
        <begin position="148"/>
        <end position="164"/>
    </location>
</feature>
<feature type="binding site" evidence="2">
    <location>
        <position position="100"/>
    </location>
    <ligand>
        <name>Zn(2+)</name>
        <dbReference type="ChEBI" id="CHEBI:29105"/>
        <label>1</label>
    </ligand>
</feature>
<feature type="binding site" evidence="2">
    <location>
        <position position="102"/>
    </location>
    <ligand>
        <name>Zn(2+)</name>
        <dbReference type="ChEBI" id="CHEBI:29105"/>
        <label>1</label>
    </ligand>
</feature>
<feature type="binding site" evidence="2">
    <location>
        <position position="107"/>
    </location>
    <ligand>
        <name>Zn(2+)</name>
        <dbReference type="ChEBI" id="CHEBI:29105"/>
        <label>2</label>
    </ligand>
</feature>
<feature type="binding site" evidence="2">
    <location>
        <position position="151"/>
    </location>
    <ligand>
        <name>Zn(2+)</name>
        <dbReference type="ChEBI" id="CHEBI:29105"/>
        <label>3</label>
    </ligand>
</feature>
<feature type="modified residue" description="N-acetylmethionine" evidence="3 7">
    <location>
        <position position="1"/>
    </location>
</feature>
<feature type="modified residue" description="Deamidated glutamine; partial" evidence="1">
    <location>
        <position position="6"/>
    </location>
</feature>
<feature type="modified residue" description="Phosphoserine" evidence="4">
    <location>
        <position position="45"/>
    </location>
</feature>
<feature type="modified residue" description="Deamidated glutamine; partial" evidence="1">
    <location>
        <position position="50"/>
    </location>
</feature>
<feature type="modified residue" description="N6-acetyllysine" evidence="4">
    <location>
        <position position="70"/>
    </location>
</feature>
<feature type="modified residue" description="N6-acetyllysine" evidence="4">
    <location>
        <position position="99"/>
    </location>
</feature>
<feature type="modified residue" description="Deamidated asparagine; partial" evidence="1">
    <location>
        <position position="101"/>
    </location>
</feature>
<feature type="glycosylation site" description="O-linked (GlcNAc) serine" evidence="1">
    <location>
        <position position="159"/>
    </location>
</feature>
<dbReference type="PIR" id="A02888">
    <property type="entry name" value="CYOWA2"/>
</dbReference>
<dbReference type="SMR" id="P02486"/>
<dbReference type="GlyCosmos" id="P02486">
    <property type="glycosylation" value="1 site, No reported glycans"/>
</dbReference>
<dbReference type="GO" id="GO:0005737">
    <property type="term" value="C:cytoplasm"/>
    <property type="evidence" value="ECO:0000250"/>
    <property type="project" value="UniProtKB"/>
</dbReference>
<dbReference type="GO" id="GO:0005634">
    <property type="term" value="C:nucleus"/>
    <property type="evidence" value="ECO:0000250"/>
    <property type="project" value="UniProtKB"/>
</dbReference>
<dbReference type="GO" id="GO:0046872">
    <property type="term" value="F:metal ion binding"/>
    <property type="evidence" value="ECO:0007669"/>
    <property type="project" value="UniProtKB-KW"/>
</dbReference>
<dbReference type="GO" id="GO:0005212">
    <property type="term" value="F:structural constituent of eye lens"/>
    <property type="evidence" value="ECO:0007669"/>
    <property type="project" value="UniProtKB-KW"/>
</dbReference>
<dbReference type="GO" id="GO:0051082">
    <property type="term" value="F:unfolded protein binding"/>
    <property type="evidence" value="ECO:0007669"/>
    <property type="project" value="TreeGrafter"/>
</dbReference>
<dbReference type="GO" id="GO:0002088">
    <property type="term" value="P:lens development in camera-type eye"/>
    <property type="evidence" value="ECO:0007669"/>
    <property type="project" value="TreeGrafter"/>
</dbReference>
<dbReference type="GO" id="GO:0043066">
    <property type="term" value="P:negative regulation of apoptotic process"/>
    <property type="evidence" value="ECO:0007669"/>
    <property type="project" value="TreeGrafter"/>
</dbReference>
<dbReference type="GO" id="GO:0042026">
    <property type="term" value="P:protein refolding"/>
    <property type="evidence" value="ECO:0007669"/>
    <property type="project" value="TreeGrafter"/>
</dbReference>
<dbReference type="GO" id="GO:0009408">
    <property type="term" value="P:response to heat"/>
    <property type="evidence" value="ECO:0007669"/>
    <property type="project" value="TreeGrafter"/>
</dbReference>
<dbReference type="FunFam" id="2.60.40.790:FF:000008">
    <property type="entry name" value="Alpha-crystallin A chain"/>
    <property type="match status" value="1"/>
</dbReference>
<dbReference type="Gene3D" id="2.60.40.790">
    <property type="match status" value="1"/>
</dbReference>
<dbReference type="InterPro" id="IPR002068">
    <property type="entry name" value="A-crystallin/Hsp20_dom"/>
</dbReference>
<dbReference type="InterPro" id="IPR055269">
    <property type="entry name" value="Alpha-crystallin/HSP_16"/>
</dbReference>
<dbReference type="InterPro" id="IPR001436">
    <property type="entry name" value="Alpha-crystallin/sHSP_animal"/>
</dbReference>
<dbReference type="InterPro" id="IPR003090">
    <property type="entry name" value="Alpha-crystallin_N"/>
</dbReference>
<dbReference type="InterPro" id="IPR008978">
    <property type="entry name" value="HSP20-like_chaperone"/>
</dbReference>
<dbReference type="PANTHER" id="PTHR45640:SF14">
    <property type="entry name" value="ALPHA-CRYSTALLIN A CHAIN"/>
    <property type="match status" value="1"/>
</dbReference>
<dbReference type="PANTHER" id="PTHR45640">
    <property type="entry name" value="HEAT SHOCK PROTEIN HSP-12.2-RELATED"/>
    <property type="match status" value="1"/>
</dbReference>
<dbReference type="Pfam" id="PF00525">
    <property type="entry name" value="Crystallin"/>
    <property type="match status" value="1"/>
</dbReference>
<dbReference type="Pfam" id="PF00011">
    <property type="entry name" value="HSP20"/>
    <property type="match status" value="1"/>
</dbReference>
<dbReference type="PIRSF" id="PIRSF036514">
    <property type="entry name" value="Sm_HSP_B1"/>
    <property type="match status" value="1"/>
</dbReference>
<dbReference type="PRINTS" id="PR00299">
    <property type="entry name" value="ACRYSTALLIN"/>
</dbReference>
<dbReference type="SUPFAM" id="SSF49764">
    <property type="entry name" value="HSP20-like chaperones"/>
    <property type="match status" value="1"/>
</dbReference>
<dbReference type="PROSITE" id="PS01031">
    <property type="entry name" value="SHSP"/>
    <property type="match status" value="1"/>
</dbReference>
<comment type="function">
    <text evidence="4">Contributes to the transparency and refractive index of the lens. Acts as a chaperone, preventing aggregation of various proteins under a wide range of stress conditions. Required for the correct formation of lens intermediate filaments as part of a complex composed of BFSP1, BFSP2 and CRYAA.</text>
</comment>
<comment type="subunit">
    <text evidence="2 4">Heteromer composed of three CRYAA and one CRYAB subunits. Inter-subunit bridging via zinc ions enhances stability, which is crucial as there is no protein turn over in the lens. Can also form homodimers and homotetramers (dimers of dimers) which serve as the building blocks of homooligomers (By similarity). Within homooligomers, the zinc-binding motif is created from residues of 3 different molecules. His-100 and Glu-102 from one molecule are ligands of the zinc ion, and His-107 and His-151 residues from additional molecules complete the site with tetrahedral coordination geometry (By similarity). Part of a complex required for lens intermediate filament formation composed of BFSP1, BFSP2 and CRYAA (By similarity).</text>
</comment>
<comment type="subcellular location">
    <subcellularLocation>
        <location evidence="4">Cytoplasm</location>
    </subcellularLocation>
    <subcellularLocation>
        <location evidence="4">Nucleus</location>
    </subcellularLocation>
    <text evidence="4">Translocates to the nucleus during heat shock and resides in sub-nuclear structures known as SC35 speckles or nuclear splicing speckles.</text>
</comment>
<comment type="PTM">
    <text evidence="4">Acetylation at Lys-70 may increase chaperone activity.</text>
</comment>
<comment type="PTM">
    <text evidence="4">Undergoes age-dependent proteolytical cleavage at the C-terminus.</text>
</comment>
<comment type="similarity">
    <text evidence="5">Belongs to the small heat shock protein (HSP20) family.</text>
</comment>
<evidence type="ECO:0000250" key="1"/>
<evidence type="ECO:0000250" key="2">
    <source>
        <dbReference type="UniProtKB" id="P02470"/>
    </source>
</evidence>
<evidence type="ECO:0000250" key="3">
    <source>
        <dbReference type="UniProtKB" id="P02474"/>
    </source>
</evidence>
<evidence type="ECO:0000250" key="4">
    <source>
        <dbReference type="UniProtKB" id="P02489"/>
    </source>
</evidence>
<evidence type="ECO:0000255" key="5">
    <source>
        <dbReference type="PROSITE-ProRule" id="PRU00285"/>
    </source>
</evidence>
<evidence type="ECO:0000256" key="6">
    <source>
        <dbReference type="SAM" id="MobiDB-lite"/>
    </source>
</evidence>
<evidence type="ECO:0000305" key="7"/>
<keyword id="KW-0007">Acetylation</keyword>
<keyword id="KW-0143">Chaperone</keyword>
<keyword id="KW-0963">Cytoplasm</keyword>
<keyword id="KW-0903">Direct protein sequencing</keyword>
<keyword id="KW-0273">Eye lens protein</keyword>
<keyword id="KW-0325">Glycoprotein</keyword>
<keyword id="KW-0479">Metal-binding</keyword>
<keyword id="KW-0488">Methylation</keyword>
<keyword id="KW-0539">Nucleus</keyword>
<keyword id="KW-0597">Phosphoprotein</keyword>
<keyword id="KW-0862">Zinc</keyword>
<gene>
    <name type="primary">CRYAA</name>
</gene>
<accession>P02486</accession>
<organism>
    <name type="scientific">Choloepus hoffmanni</name>
    <name type="common">Hoffmann's two-fingered sloth</name>
    <dbReference type="NCBI Taxonomy" id="9358"/>
    <lineage>
        <taxon>Eukaryota</taxon>
        <taxon>Metazoa</taxon>
        <taxon>Chordata</taxon>
        <taxon>Craniata</taxon>
        <taxon>Vertebrata</taxon>
        <taxon>Euteleostomi</taxon>
        <taxon>Mammalia</taxon>
        <taxon>Eutheria</taxon>
        <taxon>Xenarthra</taxon>
        <taxon>Pilosa</taxon>
        <taxon>Folivora</taxon>
        <taxon>Megalonychidae</taxon>
        <taxon>Choloepus</taxon>
    </lineage>
</organism>
<sequence length="170" mass="19591">MDVTIQHPWFRRALGPFYPSRLFDQFFGEGLFEYDLLPFLSSTISPYYRQSLFRTVLDSGISEVRSDRDKFVIFLDVKHFSPEDLTVKVLDDFVEIHGKHNERQDDHGYISREFHRRYRLPTAVDQSALSCSLSADGMLTFSGPKIVDPSHSERTIPVSREEKPSSAPSS</sequence>
<name>CRYAA_CHOHO</name>
<protein>
    <recommendedName>
        <fullName>Alpha-crystallin A chain</fullName>
    </recommendedName>
</protein>